<keyword id="KW-0002">3D-structure</keyword>
<keyword id="KW-0574">Periplasm</keyword>
<keyword id="KW-0614">Plasmid</keyword>
<keyword id="KW-1185">Reference proteome</keyword>
<keyword id="KW-0732">Signal</keyword>
<keyword id="KW-0762">Sugar transport</keyword>
<keyword id="KW-0813">Transport</keyword>
<reference key="1">
    <citation type="journal article" date="2006" name="Proc. Natl. Acad. Sci. U.S.A.">
        <title>The partitioned Rhizobium etli genome: genetic and metabolic redundancy in seven interacting replicons.</title>
        <authorList>
            <person name="Gonzalez V."/>
            <person name="Santamaria R.I."/>
            <person name="Bustos P."/>
            <person name="Hernandez-Gonzalez I."/>
            <person name="Medrano-Soto A."/>
            <person name="Moreno-Hagelsieb G."/>
            <person name="Janga S.C."/>
            <person name="Ramirez M.A."/>
            <person name="Jimenez-Jacinto V."/>
            <person name="Collado-Vides J."/>
            <person name="Davila G."/>
        </authorList>
    </citation>
    <scope>NUCLEOTIDE SEQUENCE [LARGE SCALE GENOMIC DNA]</scope>
    <source>
        <strain>ATCC 51251 / DSM 11541 / JCM 21823 / NBRC 15573 / CFN 42</strain>
    </source>
</reference>
<reference evidence="7 8" key="2">
    <citation type="journal article" date="2018" name="Nat. Chem. Biol.">
        <title>Functional assignment of multiple catabolic pathways for D-apiose.</title>
        <authorList>
            <person name="Carter M.S."/>
            <person name="Zhang X."/>
            <person name="Huang H."/>
            <person name="Bouvier J.T."/>
            <person name="Francisco B.S."/>
            <person name="Vetting M.W."/>
            <person name="Al-Obaidi N."/>
            <person name="Bonanno J.B."/>
            <person name="Ghosh A."/>
            <person name="Zallot R.G."/>
            <person name="Andersen H.M."/>
            <person name="Almo S.C."/>
            <person name="Gerlt J.A."/>
        </authorList>
    </citation>
    <scope>X-RAY CRYSTALLOGRAPHY (1.20 ANGSTROMS) OF 27-313 IN COMPLEXES WITH D-RIBOSE AND D-APIOSE</scope>
    <scope>FUNCTION</scope>
    <source>
        <strain>ATCC 51251 / DSM 11541 / JCM 21823 / NBRC 15573 / CFN 42</strain>
    </source>
</reference>
<proteinExistence type="evidence at protein level"/>
<organism>
    <name type="scientific">Rhizobium etli (strain ATCC 51251 / DSM 11541 / JCM 21823 / NBRC 15573 / CFN 42)</name>
    <dbReference type="NCBI Taxonomy" id="347834"/>
    <lineage>
        <taxon>Bacteria</taxon>
        <taxon>Pseudomonadati</taxon>
        <taxon>Pseudomonadota</taxon>
        <taxon>Alphaproteobacteria</taxon>
        <taxon>Hyphomicrobiales</taxon>
        <taxon>Rhizobiaceae</taxon>
        <taxon>Rhizobium/Agrobacterium group</taxon>
        <taxon>Rhizobium</taxon>
    </lineage>
</organism>
<accession>Q2JZQ5</accession>
<gene>
    <name evidence="6" type="ordered locus">RHE_PF00037</name>
</gene>
<sequence>MKLTRRLTLAAFASALALGTAMPAFAADLIAIITPAHDNPFFKAEAVGAEAKAKELGYETLVMTHDDDANKQSEMIDTAIGRGAKAIILDNAGADASVAAVKKAKDAGIPSFLIDREINATGVAVAQIVSNNYQGAQLGAQEFVKLMGEKGNYVELVGKESDTNAGIRSQGYHDVIDDYPEMKSVAKQSANWSQTEAYSKMETILQANPDIKGVISGNDTMAMGAIAALQAAGRKDVIVVGFDGSNDVRDSIKSGGIKATVLQPAYAQAQLAVEQADAYIKNKTTPKEEKQLMDCVLINADNAGKLETFALTN</sequence>
<dbReference type="EMBL" id="CP000138">
    <property type="protein sequence ID" value="ABC93931.1"/>
    <property type="molecule type" value="Genomic_DNA"/>
</dbReference>
<dbReference type="RefSeq" id="WP_011428349.1">
    <property type="nucleotide sequence ID" value="NC_007766.1"/>
</dbReference>
<dbReference type="PDB" id="4RY0">
    <property type="method" value="X-ray"/>
    <property type="resolution" value="1.40 A"/>
    <property type="chains" value="A=27-313"/>
</dbReference>
<dbReference type="PDB" id="5IBQ">
    <property type="method" value="X-ray"/>
    <property type="resolution" value="1.20 A"/>
    <property type="chains" value="A=27-313"/>
</dbReference>
<dbReference type="PDBsum" id="4RY0"/>
<dbReference type="PDBsum" id="5IBQ"/>
<dbReference type="SMR" id="Q2JZQ5"/>
<dbReference type="KEGG" id="ret:RHE_PF00037"/>
<dbReference type="HOGENOM" id="CLU_037628_3_2_5"/>
<dbReference type="OrthoDB" id="9805127at2"/>
<dbReference type="EvolutionaryTrace" id="Q2JZQ5"/>
<dbReference type="Proteomes" id="UP000001936">
    <property type="component" value="Plasmid p42f"/>
</dbReference>
<dbReference type="GO" id="GO:0042597">
    <property type="term" value="C:periplasmic space"/>
    <property type="evidence" value="ECO:0007669"/>
    <property type="project" value="UniProtKB-SubCell"/>
</dbReference>
<dbReference type="GO" id="GO:0030246">
    <property type="term" value="F:carbohydrate binding"/>
    <property type="evidence" value="ECO:0007669"/>
    <property type="project" value="UniProtKB-ARBA"/>
</dbReference>
<dbReference type="CDD" id="cd19967">
    <property type="entry name" value="PBP1_TmRBP-like"/>
    <property type="match status" value="1"/>
</dbReference>
<dbReference type="Gene3D" id="3.40.50.2300">
    <property type="match status" value="2"/>
</dbReference>
<dbReference type="InterPro" id="IPR028082">
    <property type="entry name" value="Peripla_BP_I"/>
</dbReference>
<dbReference type="InterPro" id="IPR025997">
    <property type="entry name" value="SBP_2_dom"/>
</dbReference>
<dbReference type="PANTHER" id="PTHR46847">
    <property type="entry name" value="D-ALLOSE-BINDING PERIPLASMIC PROTEIN-RELATED"/>
    <property type="match status" value="1"/>
</dbReference>
<dbReference type="PANTHER" id="PTHR46847:SF1">
    <property type="entry name" value="D-ALLOSE-BINDING PERIPLASMIC PROTEIN-RELATED"/>
    <property type="match status" value="1"/>
</dbReference>
<dbReference type="Pfam" id="PF13407">
    <property type="entry name" value="Peripla_BP_4"/>
    <property type="match status" value="1"/>
</dbReference>
<dbReference type="SUPFAM" id="SSF53822">
    <property type="entry name" value="Periplasmic binding protein-like I"/>
    <property type="match status" value="1"/>
</dbReference>
<name>APIBP_RHIEC</name>
<evidence type="ECO:0000255" key="1"/>
<evidence type="ECO:0000269" key="2">
    <source>
    </source>
</evidence>
<evidence type="ECO:0000303" key="3">
    <source>
    </source>
</evidence>
<evidence type="ECO:0000305" key="4"/>
<evidence type="ECO:0000305" key="5">
    <source>
    </source>
</evidence>
<evidence type="ECO:0000312" key="6">
    <source>
        <dbReference type="EMBL" id="ABC93931.1"/>
    </source>
</evidence>
<evidence type="ECO:0007744" key="7">
    <source>
        <dbReference type="PDB" id="4RY0"/>
    </source>
</evidence>
<evidence type="ECO:0007744" key="8">
    <source>
        <dbReference type="PDB" id="5IBQ"/>
    </source>
</evidence>
<evidence type="ECO:0007829" key="9">
    <source>
        <dbReference type="PDB" id="5IBQ"/>
    </source>
</evidence>
<comment type="function">
    <text evidence="2 5">Part of an ABC transporter complex involved in D-apiose import (Probable). Binds D-apiose, D-ribose and D-ribulose (PubMed:29867142).</text>
</comment>
<comment type="subcellular location">
    <subcellularLocation>
        <location evidence="4">Periplasm</location>
    </subcellularLocation>
</comment>
<comment type="similarity">
    <text evidence="4">Belongs to the bacterial solute-binding protein 2 family.</text>
</comment>
<geneLocation type="plasmid">
    <name>p42f</name>
</geneLocation>
<protein>
    <recommendedName>
        <fullName evidence="4">D-apiose import binding protein</fullName>
    </recommendedName>
    <alternativeName>
        <fullName evidence="3">D-apiose binding SBP</fullName>
    </alternativeName>
</protein>
<feature type="signal peptide" evidence="1">
    <location>
        <begin position="1"/>
        <end position="26"/>
    </location>
</feature>
<feature type="chain" id="PRO_5004211155" description="D-apiose import binding protein">
    <location>
        <begin position="27"/>
        <end position="313"/>
    </location>
</feature>
<feature type="binding site" evidence="5">
    <location>
        <position position="39"/>
    </location>
    <ligand>
        <name>D-apiofuranose</name>
        <dbReference type="ChEBI" id="CHEBI:141215"/>
    </ligand>
</feature>
<feature type="binding site" evidence="5">
    <location>
        <begin position="115"/>
        <end position="116"/>
    </location>
    <ligand>
        <name>D-apiofuranose</name>
        <dbReference type="ChEBI" id="CHEBI:141215"/>
    </ligand>
</feature>
<feature type="binding site" evidence="5">
    <location>
        <begin position="162"/>
        <end position="164"/>
    </location>
    <ligand>
        <name>D-apiofuranose</name>
        <dbReference type="ChEBI" id="CHEBI:141215"/>
    </ligand>
</feature>
<feature type="binding site" evidence="5">
    <location>
        <position position="168"/>
    </location>
    <ligand>
        <name>D-apiofuranose</name>
        <dbReference type="ChEBI" id="CHEBI:141215"/>
    </ligand>
</feature>
<feature type="binding site" evidence="5">
    <location>
        <position position="218"/>
    </location>
    <ligand>
        <name>D-apiofuranose</name>
        <dbReference type="ChEBI" id="CHEBI:141215"/>
    </ligand>
</feature>
<feature type="binding site" evidence="5">
    <location>
        <position position="243"/>
    </location>
    <ligand>
        <name>D-apiofuranose</name>
        <dbReference type="ChEBI" id="CHEBI:141215"/>
    </ligand>
</feature>
<feature type="binding site" evidence="5">
    <location>
        <position position="263"/>
    </location>
    <ligand>
        <name>D-apiofuranose</name>
        <dbReference type="ChEBI" id="CHEBI:141215"/>
    </ligand>
</feature>
<feature type="strand" evidence="9">
    <location>
        <begin position="29"/>
        <end position="35"/>
    </location>
</feature>
<feature type="helix" evidence="9">
    <location>
        <begin position="40"/>
        <end position="55"/>
    </location>
</feature>
<feature type="strand" evidence="9">
    <location>
        <begin position="59"/>
        <end position="64"/>
    </location>
</feature>
<feature type="helix" evidence="9">
    <location>
        <begin position="69"/>
        <end position="81"/>
    </location>
</feature>
<feature type="strand" evidence="9">
    <location>
        <begin position="85"/>
        <end position="89"/>
    </location>
</feature>
<feature type="turn" evidence="9">
    <location>
        <begin position="94"/>
        <end position="97"/>
    </location>
</feature>
<feature type="helix" evidence="9">
    <location>
        <begin position="98"/>
        <end position="106"/>
    </location>
</feature>
<feature type="strand" evidence="9">
    <location>
        <begin position="111"/>
        <end position="116"/>
    </location>
</feature>
<feature type="strand" evidence="9">
    <location>
        <begin position="121"/>
        <end position="130"/>
    </location>
</feature>
<feature type="helix" evidence="9">
    <location>
        <begin position="132"/>
        <end position="146"/>
    </location>
</feature>
<feature type="turn" evidence="9">
    <location>
        <begin position="147"/>
        <end position="149"/>
    </location>
</feature>
<feature type="strand" evidence="9">
    <location>
        <begin position="151"/>
        <end position="157"/>
    </location>
</feature>
<feature type="helix" evidence="9">
    <location>
        <begin position="163"/>
        <end position="176"/>
    </location>
</feature>
<feature type="strand" evidence="9">
    <location>
        <begin position="182"/>
        <end position="189"/>
    </location>
</feature>
<feature type="helix" evidence="9">
    <location>
        <begin position="194"/>
        <end position="207"/>
    </location>
</feature>
<feature type="strand" evidence="9">
    <location>
        <begin position="213"/>
        <end position="218"/>
    </location>
</feature>
<feature type="helix" evidence="9">
    <location>
        <begin position="219"/>
        <end position="231"/>
    </location>
</feature>
<feature type="strand" evidence="9">
    <location>
        <begin position="237"/>
        <end position="240"/>
    </location>
</feature>
<feature type="helix" evidence="9">
    <location>
        <begin position="246"/>
        <end position="253"/>
    </location>
</feature>
<feature type="strand" evidence="9">
    <location>
        <begin position="259"/>
        <end position="262"/>
    </location>
</feature>
<feature type="helix" evidence="9">
    <location>
        <begin position="265"/>
        <end position="282"/>
    </location>
</feature>
<feature type="strand" evidence="9">
    <location>
        <begin position="287"/>
        <end position="293"/>
    </location>
</feature>
<feature type="strand" evidence="9">
    <location>
        <begin position="296"/>
        <end position="298"/>
    </location>
</feature>
<feature type="turn" evidence="9">
    <location>
        <begin position="300"/>
        <end position="302"/>
    </location>
</feature>
<feature type="helix" evidence="9">
    <location>
        <begin position="303"/>
        <end position="305"/>
    </location>
</feature>